<name>D19L3_HUMAN</name>
<protein>
    <recommendedName>
        <fullName>Protein C-mannosyl-transferase DPY19L3</fullName>
        <ecNumber evidence="4 5">2.4.1.-</ecNumber>
    </recommendedName>
    <alternativeName>
        <fullName>Dpy-19-like protein 3</fullName>
    </alternativeName>
    <alternativeName>
        <fullName>Protein dpy-19 homolog 3</fullName>
    </alternativeName>
</protein>
<evidence type="ECO:0000250" key="1">
    <source>
        <dbReference type="UniProtKB" id="Q71B07"/>
    </source>
</evidence>
<evidence type="ECO:0000255" key="2"/>
<evidence type="ECO:0000269" key="3">
    <source>
    </source>
</evidence>
<evidence type="ECO:0000269" key="4">
    <source>
    </source>
</evidence>
<evidence type="ECO:0000269" key="5">
    <source>
    </source>
</evidence>
<evidence type="ECO:0000303" key="6">
    <source>
    </source>
</evidence>
<evidence type="ECO:0000303" key="7">
    <source>
    </source>
</evidence>
<evidence type="ECO:0000305" key="8"/>
<evidence type="ECO:0000305" key="9">
    <source>
    </source>
</evidence>
<evidence type="ECO:0000305" key="10">
    <source>
    </source>
</evidence>
<organism>
    <name type="scientific">Homo sapiens</name>
    <name type="common">Human</name>
    <dbReference type="NCBI Taxonomy" id="9606"/>
    <lineage>
        <taxon>Eukaryota</taxon>
        <taxon>Metazoa</taxon>
        <taxon>Chordata</taxon>
        <taxon>Craniata</taxon>
        <taxon>Vertebrata</taxon>
        <taxon>Euteleostomi</taxon>
        <taxon>Mammalia</taxon>
        <taxon>Eutheria</taxon>
        <taxon>Euarchontoglires</taxon>
        <taxon>Primates</taxon>
        <taxon>Haplorrhini</taxon>
        <taxon>Catarrhini</taxon>
        <taxon>Hominidae</taxon>
        <taxon>Homo</taxon>
    </lineage>
</organism>
<feature type="chain" id="PRO_0000311901" description="Protein C-mannosyl-transferase DPY19L3">
    <location>
        <begin position="1"/>
        <end position="716"/>
    </location>
</feature>
<feature type="topological domain" description="Cytoplasmic" evidence="7">
    <location>
        <begin position="1"/>
        <end position="43"/>
    </location>
</feature>
<feature type="transmembrane region" description="Helical; Name=1" evidence="2">
    <location>
        <begin position="44"/>
        <end position="64"/>
    </location>
</feature>
<feature type="topological domain" description="Lumenal" evidence="5">
    <location>
        <begin position="65"/>
        <end position="154"/>
    </location>
</feature>
<feature type="transmembrane region" description="Helical; Name=2" evidence="2">
    <location>
        <begin position="155"/>
        <end position="182"/>
    </location>
</feature>
<feature type="topological domain" description="Cytoplasmic" evidence="5">
    <location>
        <begin position="183"/>
        <end position="184"/>
    </location>
</feature>
<feature type="intramembrane region" description="Name=3" evidence="7">
    <location>
        <begin position="185"/>
        <end position="197"/>
    </location>
</feature>
<feature type="topological domain" description="Cytoplasmic" evidence="5">
    <location>
        <begin position="198"/>
        <end position="215"/>
    </location>
</feature>
<feature type="intramembrane region" description="Name=4" evidence="7">
    <location>
        <begin position="216"/>
        <end position="230"/>
    </location>
</feature>
<feature type="topological domain" description="Cytoplasmic" evidence="5">
    <location>
        <begin position="231"/>
        <end position="239"/>
    </location>
</feature>
<feature type="transmembrane region" description="Helical; Name=5" evidence="7">
    <location>
        <begin position="240"/>
        <end position="256"/>
    </location>
</feature>
<feature type="topological domain" description="Lumenal" evidence="5">
    <location>
        <begin position="257"/>
        <end position="262"/>
    </location>
</feature>
<feature type="transmembrane region" description="Helical; Name=6" evidence="7">
    <location>
        <begin position="263"/>
        <end position="279"/>
    </location>
</feature>
<feature type="topological domain" description="Cytoplasmic" evidence="5">
    <location>
        <begin position="280"/>
        <end position="289"/>
    </location>
</feature>
<feature type="transmembrane region" description="Helical; Name=7" evidence="7">
    <location>
        <begin position="290"/>
        <end position="306"/>
    </location>
</feature>
<feature type="topological domain" description="Lumenal" evidence="5">
    <location>
        <begin position="307"/>
        <end position="308"/>
    </location>
</feature>
<feature type="transmembrane region" description="Helical; Name=8" evidence="7">
    <location>
        <begin position="309"/>
        <end position="323"/>
    </location>
</feature>
<feature type="topological domain" description="Cytoplasmic" evidence="5">
    <location>
        <begin position="324"/>
        <end position="338"/>
    </location>
</feature>
<feature type="transmembrane region" description="Helical; Name=9" evidence="7">
    <location>
        <begin position="339"/>
        <end position="359"/>
    </location>
</feature>
<feature type="topological domain" description="Lumenal" evidence="5">
    <location>
        <begin position="360"/>
        <end position="414"/>
    </location>
</feature>
<feature type="transmembrane region" description="Helical; Name=10" evidence="7">
    <location>
        <begin position="415"/>
        <end position="437"/>
    </location>
</feature>
<feature type="topological domain" description="Cytoplasmic" evidence="5">
    <location>
        <begin position="438"/>
        <end position="465"/>
    </location>
</feature>
<feature type="transmembrane region" description="Helical; Name=11" evidence="7">
    <location>
        <begin position="466"/>
        <end position="485"/>
    </location>
</feature>
<feature type="topological domain" description="Lumenal" evidence="5">
    <location>
        <begin position="486"/>
        <end position="487"/>
    </location>
</feature>
<feature type="transmembrane region" description="Helical; Name=12" evidence="7">
    <location>
        <begin position="488"/>
        <end position="499"/>
    </location>
</feature>
<feature type="topological domain" description="Cytoplasmic" evidence="5">
    <location>
        <begin position="500"/>
        <end position="522"/>
    </location>
</feature>
<feature type="transmembrane region" description="Helical; Name=13" evidence="7">
    <location>
        <begin position="523"/>
        <end position="539"/>
    </location>
</feature>
<feature type="topological domain" description="Lumenal" evidence="5">
    <location>
        <begin position="540"/>
        <end position="716"/>
    </location>
</feature>
<feature type="glycosylation site" description="N-linked (GlcNAc...) asparagine" evidence="5">
    <location>
        <position position="118"/>
    </location>
</feature>
<feature type="glycosylation site" description="N-linked (GlcNAc...) asparagine" evidence="5">
    <location>
        <position position="704"/>
    </location>
</feature>
<feature type="splice variant" id="VSP_029634" description="In isoform 2." evidence="6">
    <original>FWPG</original>
    <variation>NQKS</variation>
    <location>
        <begin position="539"/>
        <end position="542"/>
    </location>
</feature>
<feature type="splice variant" id="VSP_029635" description="In isoform 2." evidence="6">
    <location>
        <begin position="543"/>
        <end position="716"/>
    </location>
</feature>
<feature type="sequence variant" id="VAR_037336" description="In dbSNP:rs8105178.">
    <original>M</original>
    <variation>V</variation>
    <location>
        <position position="350"/>
    </location>
</feature>
<feature type="mutagenesis site" description="Does not affect endoplasmic reticulum membrane localization. Does not affect mannosyltransferase activity." evidence="5">
    <original>N</original>
    <variation>Q</variation>
    <location>
        <position position="118"/>
    </location>
</feature>
<feature type="mutagenesis site" description="Does not affect endoplasmic reticulum membrane localization. Does not affect mannosyltransferase activity." evidence="5">
    <original>N</original>
    <variation>Q</variation>
    <location>
        <position position="704"/>
    </location>
</feature>
<feature type="sequence conflict" description="In Ref. 1; BAC86676." evidence="8" ref="1">
    <original>R</original>
    <variation>G</variation>
    <location>
        <position position="482"/>
    </location>
</feature>
<sequence>MMSIRQRREIRATEVSEDFPAQEENVKLENKLPSGCTSRRLWKILSLTIGGTIALCIGLLTSVYLATLHENDLWFSNIKEVEREISFRTECGLYYSYYKQMLQAPTLVQGFHGLIYDNKTESMKTINLLQRMNIYQEVFLSILYRVLPIQKYLEPVYFYIYTLFGLQAIYVTALYITSWLLSGTWLSGLLAAFWYVTNRIDTTRVEFTIPLRENWALPFFAIQIAAITYFLRPNLQPLSERLTLLAIFISTFLFSLTWQFNQFMMLMQALVLFTLDSLDMLPAVKATWLYGIQITSLLLVCILQFFNSMILGSLLISFNLSVFIARKLQKNLKTGSFLNRLGKLLLHLFMVLCLTLFLNNIIKKILNLKSDEHIFKFLKAKFGLGATRDFDANLYLCEEAFGLLPFNTFGRLSDTLLFYAYIFVLSITVIVAFVVAFHNLSDSTNQQSVGKMEKGTVDLKPETAYNLIHTILFGFLALSTMRMKYLWTSHMCVFASFGLCSPEIWELLLKSVHLYNPKRICIMRYSVPILILLYLCYKFWPGMMDELSELREFYDPDTVELMNWINSNTPRKAVFAGSMQLLAGVKLCTGRTLTNHPHYEDSSLRERTRAVYQIYAKRAPEEVHALLRSFGTDYVILEDSICYERRHRRGCRLRDLLDIANGHMMDGPGENDPDLKPADHPRFCEEIKRNLPPYVAYFTRVFQNKTFHVYKLSRNK</sequence>
<keyword id="KW-0025">Alternative splicing</keyword>
<keyword id="KW-0256">Endoplasmic reticulum</keyword>
<keyword id="KW-0325">Glycoprotein</keyword>
<keyword id="KW-0328">Glycosyltransferase</keyword>
<keyword id="KW-0472">Membrane</keyword>
<keyword id="KW-1267">Proteomics identification</keyword>
<keyword id="KW-1185">Reference proteome</keyword>
<keyword id="KW-0808">Transferase</keyword>
<keyword id="KW-0812">Transmembrane</keyword>
<keyword id="KW-1133">Transmembrane helix</keyword>
<dbReference type="EC" id="2.4.1.-" evidence="4 5"/>
<dbReference type="EMBL" id="AK126264">
    <property type="protein sequence ID" value="BAC86508.1"/>
    <property type="status" value="ALT_INIT"/>
    <property type="molecule type" value="mRNA"/>
</dbReference>
<dbReference type="EMBL" id="AK126757">
    <property type="protein sequence ID" value="BAC86676.1"/>
    <property type="molecule type" value="mRNA"/>
</dbReference>
<dbReference type="EMBL" id="AK129497">
    <property type="protein sequence ID" value="BAC85166.1"/>
    <property type="molecule type" value="mRNA"/>
</dbReference>
<dbReference type="EMBL" id="BC131725">
    <property type="protein sequence ID" value="AAI31726.1"/>
    <property type="molecule type" value="mRNA"/>
</dbReference>
<dbReference type="EMBL" id="CR749459">
    <property type="protein sequence ID" value="CAH18293.1"/>
    <property type="molecule type" value="mRNA"/>
</dbReference>
<dbReference type="CCDS" id="CCDS12422.1">
    <molecule id="Q6ZPD9-1"/>
</dbReference>
<dbReference type="RefSeq" id="NP_001166245.1">
    <molecule id="Q6ZPD9-1"/>
    <property type="nucleotide sequence ID" value="NM_001172774.2"/>
</dbReference>
<dbReference type="RefSeq" id="NP_997208.2">
    <molecule id="Q6ZPD9-1"/>
    <property type="nucleotide sequence ID" value="NM_207325.3"/>
</dbReference>
<dbReference type="RefSeq" id="XP_011524828.1">
    <molecule id="Q6ZPD9-1"/>
    <property type="nucleotide sequence ID" value="XM_011526526.3"/>
</dbReference>
<dbReference type="RefSeq" id="XP_047294205.1">
    <molecule id="Q6ZPD9-2"/>
    <property type="nucleotide sequence ID" value="XM_047438249.1"/>
</dbReference>
<dbReference type="RefSeq" id="XP_047294206.1">
    <molecule id="Q6ZPD9-2"/>
    <property type="nucleotide sequence ID" value="XM_047438250.1"/>
</dbReference>
<dbReference type="RefSeq" id="XP_047294207.1">
    <molecule id="Q6ZPD9-2"/>
    <property type="nucleotide sequence ID" value="XM_047438251.1"/>
</dbReference>
<dbReference type="RefSeq" id="XP_054175928.1">
    <molecule id="Q6ZPD9-1"/>
    <property type="nucleotide sequence ID" value="XM_054319953.1"/>
</dbReference>
<dbReference type="RefSeq" id="XP_054175932.1">
    <molecule id="Q6ZPD9-2"/>
    <property type="nucleotide sequence ID" value="XM_054319957.1"/>
</dbReference>
<dbReference type="RefSeq" id="XP_054175933.1">
    <molecule id="Q6ZPD9-2"/>
    <property type="nucleotide sequence ID" value="XM_054319958.1"/>
</dbReference>
<dbReference type="SMR" id="Q6ZPD9"/>
<dbReference type="BioGRID" id="127110">
    <property type="interactions" value="30"/>
</dbReference>
<dbReference type="FunCoup" id="Q6ZPD9">
    <property type="interactions" value="822"/>
</dbReference>
<dbReference type="IntAct" id="Q6ZPD9">
    <property type="interactions" value="22"/>
</dbReference>
<dbReference type="STRING" id="9606.ENSP00000344937"/>
<dbReference type="CAZy" id="GT98">
    <property type="family name" value="Glycosyltransferase Family 98"/>
</dbReference>
<dbReference type="GlyGen" id="Q6ZPD9">
    <property type="glycosylation" value="4 sites, 3 N-linked glycans (1 site)"/>
</dbReference>
<dbReference type="iPTMnet" id="Q6ZPD9"/>
<dbReference type="PhosphoSitePlus" id="Q6ZPD9"/>
<dbReference type="SwissPalm" id="Q6ZPD9"/>
<dbReference type="BioMuta" id="DPY19L3"/>
<dbReference type="DMDM" id="74710923"/>
<dbReference type="jPOST" id="Q6ZPD9"/>
<dbReference type="MassIVE" id="Q6ZPD9"/>
<dbReference type="PaxDb" id="9606-ENSP00000344937"/>
<dbReference type="PeptideAtlas" id="Q6ZPD9"/>
<dbReference type="ProteomicsDB" id="68077">
    <molecule id="Q6ZPD9-1"/>
</dbReference>
<dbReference type="ProteomicsDB" id="68078">
    <molecule id="Q6ZPD9-2"/>
</dbReference>
<dbReference type="Pumba" id="Q6ZPD9"/>
<dbReference type="Antibodypedia" id="2035">
    <property type="antibodies" value="93 antibodies from 14 providers"/>
</dbReference>
<dbReference type="DNASU" id="147991"/>
<dbReference type="Ensembl" id="ENST00000342179.9">
    <molecule id="Q6ZPD9-1"/>
    <property type="protein sequence ID" value="ENSP00000344937.4"/>
    <property type="gene ID" value="ENSG00000178904.19"/>
</dbReference>
<dbReference type="Ensembl" id="ENST00000392250.7">
    <molecule id="Q6ZPD9-1"/>
    <property type="protein sequence ID" value="ENSP00000376081.2"/>
    <property type="gene ID" value="ENSG00000178904.19"/>
</dbReference>
<dbReference type="GeneID" id="147991"/>
<dbReference type="KEGG" id="hsa:147991"/>
<dbReference type="MANE-Select" id="ENST00000392250.7">
    <property type="protein sequence ID" value="ENSP00000376081.2"/>
    <property type="RefSeq nucleotide sequence ID" value="NM_001172774.2"/>
    <property type="RefSeq protein sequence ID" value="NP_001166245.1"/>
</dbReference>
<dbReference type="UCSC" id="uc002ntg.4">
    <molecule id="Q6ZPD9-1"/>
    <property type="organism name" value="human"/>
</dbReference>
<dbReference type="AGR" id="HGNC:27120"/>
<dbReference type="CTD" id="147991"/>
<dbReference type="DisGeNET" id="147991"/>
<dbReference type="GeneCards" id="DPY19L3"/>
<dbReference type="HGNC" id="HGNC:27120">
    <property type="gene designation" value="DPY19L3"/>
</dbReference>
<dbReference type="HPA" id="ENSG00000178904">
    <property type="expression patterns" value="Low tissue specificity"/>
</dbReference>
<dbReference type="MIM" id="613894">
    <property type="type" value="gene"/>
</dbReference>
<dbReference type="neXtProt" id="NX_Q6ZPD9"/>
<dbReference type="OpenTargets" id="ENSG00000178904"/>
<dbReference type="PharmGKB" id="PA142671954"/>
<dbReference type="VEuPathDB" id="HostDB:ENSG00000178904"/>
<dbReference type="eggNOG" id="KOG4587">
    <property type="taxonomic scope" value="Eukaryota"/>
</dbReference>
<dbReference type="GeneTree" id="ENSGT00530000063023"/>
<dbReference type="HOGENOM" id="CLU_014404_1_0_1"/>
<dbReference type="InParanoid" id="Q6ZPD9"/>
<dbReference type="OMA" id="HPHYENK"/>
<dbReference type="OrthoDB" id="6019623at2759"/>
<dbReference type="PAN-GO" id="Q6ZPD9">
    <property type="GO annotations" value="3 GO annotations based on evolutionary models"/>
</dbReference>
<dbReference type="PhylomeDB" id="Q6ZPD9"/>
<dbReference type="TreeFam" id="TF313376"/>
<dbReference type="BRENDA" id="2.4.1.B72">
    <property type="organism ID" value="2681"/>
</dbReference>
<dbReference type="PathwayCommons" id="Q6ZPD9"/>
<dbReference type="SignaLink" id="Q6ZPD9"/>
<dbReference type="UniPathway" id="UPA00378"/>
<dbReference type="BioGRID-ORCS" id="147991">
    <property type="hits" value="12 hits in 1156 CRISPR screens"/>
</dbReference>
<dbReference type="ChiTaRS" id="DPY19L3">
    <property type="organism name" value="human"/>
</dbReference>
<dbReference type="GenomeRNAi" id="147991"/>
<dbReference type="Pharos" id="Q6ZPD9">
    <property type="development level" value="Tbio"/>
</dbReference>
<dbReference type="PRO" id="PR:Q6ZPD9"/>
<dbReference type="Proteomes" id="UP000005640">
    <property type="component" value="Chromosome 19"/>
</dbReference>
<dbReference type="RNAct" id="Q6ZPD9">
    <property type="molecule type" value="protein"/>
</dbReference>
<dbReference type="Bgee" id="ENSG00000178904">
    <property type="expression patterns" value="Expressed in tibia and 179 other cell types or tissues"/>
</dbReference>
<dbReference type="ExpressionAtlas" id="Q6ZPD9">
    <property type="expression patterns" value="baseline and differential"/>
</dbReference>
<dbReference type="GO" id="GO:0005789">
    <property type="term" value="C:endoplasmic reticulum membrane"/>
    <property type="evidence" value="ECO:0000314"/>
    <property type="project" value="UniProtKB"/>
</dbReference>
<dbReference type="GO" id="GO:0000030">
    <property type="term" value="F:mannosyltransferase activity"/>
    <property type="evidence" value="ECO:0000314"/>
    <property type="project" value="UniProtKB"/>
</dbReference>
<dbReference type="GO" id="GO:0006486">
    <property type="term" value="P:protein glycosylation"/>
    <property type="evidence" value="ECO:0007669"/>
    <property type="project" value="UniProtKB-UniPathway"/>
</dbReference>
<dbReference type="CDD" id="cd20181">
    <property type="entry name" value="Dpy19L3"/>
    <property type="match status" value="1"/>
</dbReference>
<dbReference type="InterPro" id="IPR018732">
    <property type="entry name" value="Dpy-19/Dpy-19-like"/>
</dbReference>
<dbReference type="InterPro" id="IPR047465">
    <property type="entry name" value="Dpy19L3"/>
</dbReference>
<dbReference type="PANTHER" id="PTHR31488:SF4">
    <property type="entry name" value="C-MANNOSYLTRANSFERASE DPY19L3-RELATED"/>
    <property type="match status" value="1"/>
</dbReference>
<dbReference type="PANTHER" id="PTHR31488">
    <property type="entry name" value="DPY-19-LIKE 1, LIKE (H. SAPIENS)"/>
    <property type="match status" value="1"/>
</dbReference>
<dbReference type="Pfam" id="PF10034">
    <property type="entry name" value="Dpy19"/>
    <property type="match status" value="1"/>
</dbReference>
<proteinExistence type="evidence at protein level"/>
<comment type="function">
    <text evidence="1 4 5">C-mannosyltransferase that mediates C-mannosylation of tryptophan residues on target proteins. The reaction occurs on the luminal side of the endoplasmic reticulum and involves the transfer of a mannose unit from a dolichylphosphate mannose (Dol-P-Man) donor to an acceptor protein containing a WxxW or WxxC consensus sequence (PubMed:26764097, PubMed:29405629). C-mannosylates RSPO1, a Wnt signaling regulator, preferentially at the first Trp residue in the sequence WxxW (PubMed:26764097, PubMed:29405629). C-mannosylates the netrin receptor UNC5A, preferentially at the third tryptophan of WxxWxxWxxC sequence (By similarity).</text>
</comment>
<comment type="function">
    <molecule>Isoform 2</molecule>
    <text evidence="5">Has no C-mannosyltransferase activity.</text>
</comment>
<comment type="catalytic activity">
    <reaction evidence="4 5">
        <text>L-tryptophyl-[protein] + a di-trans,poly-cis-dolichyl beta-D-mannosyl phosphate = C-alpha-D-mannosyl-L-tryptophyl-[protein] + a di-trans,poly-cis-dolichyl phosphate + H(+)</text>
        <dbReference type="Rhea" id="RHEA:77219"/>
        <dbReference type="Rhea" id="RHEA-COMP:15365"/>
        <dbReference type="Rhea" id="RHEA-COMP:18864"/>
        <dbReference type="Rhea" id="RHEA-COMP:19498"/>
        <dbReference type="Rhea" id="RHEA-COMP:19501"/>
        <dbReference type="ChEBI" id="CHEBI:15378"/>
        <dbReference type="ChEBI" id="CHEBI:29954"/>
        <dbReference type="ChEBI" id="CHEBI:57683"/>
        <dbReference type="ChEBI" id="CHEBI:58211"/>
        <dbReference type="ChEBI" id="CHEBI:195646"/>
    </reaction>
    <physiologicalReaction direction="left-to-right" evidence="9 10">
        <dbReference type="Rhea" id="RHEA:77220"/>
    </physiologicalReaction>
</comment>
<comment type="pathway">
    <text evidence="4 5">Protein modification; protein glycosylation.</text>
</comment>
<comment type="interaction">
    <interactant intactId="EBI-25888224">
        <id>Q6ZPD9-2</id>
    </interactant>
    <interactant intactId="EBI-2432309">
        <id>Q92876</id>
        <label>KLK6</label>
    </interactant>
    <organismsDiffer>false</organismsDiffer>
    <experiments>3</experiments>
</comment>
<comment type="subcellular location">
    <subcellularLocation>
        <location evidence="5">Endoplasmic reticulum membrane</location>
        <topology evidence="5">Multi-pass membrane protein</topology>
    </subcellularLocation>
</comment>
<comment type="subcellular location">
    <molecule>Isoform 2</molecule>
    <subcellularLocation>
        <location evidence="5">Endoplasmic reticulum membrane</location>
        <topology evidence="8">Multi-pass membrane protein</topology>
    </subcellularLocation>
</comment>
<comment type="alternative products">
    <event type="alternative splicing"/>
    <isoform>
        <id>Q6ZPD9-1</id>
        <name>1</name>
        <sequence type="displayed"/>
    </isoform>
    <isoform>
        <id>Q6ZPD9-2</id>
        <name>2</name>
        <sequence type="described" ref="VSP_029634 VSP_029635"/>
    </isoform>
</comment>
<comment type="tissue specificity">
    <text evidence="3">Widely expressed.</text>
</comment>
<comment type="domain">
    <text evidence="5">The C-terminal luminal region is essential for C-mannosyltransferase activity.</text>
</comment>
<comment type="similarity">
    <text evidence="8">Belongs to the dpy-19 family.</text>
</comment>
<comment type="sequence caution" evidence="8">
    <conflict type="erroneous initiation">
        <sequence resource="EMBL-CDS" id="BAC86508"/>
    </conflict>
</comment>
<reference key="1">
    <citation type="journal article" date="2004" name="Nat. Genet.">
        <title>Complete sequencing and characterization of 21,243 full-length human cDNAs.</title>
        <authorList>
            <person name="Ota T."/>
            <person name="Suzuki Y."/>
            <person name="Nishikawa T."/>
            <person name="Otsuki T."/>
            <person name="Sugiyama T."/>
            <person name="Irie R."/>
            <person name="Wakamatsu A."/>
            <person name="Hayashi K."/>
            <person name="Sato H."/>
            <person name="Nagai K."/>
            <person name="Kimura K."/>
            <person name="Makita H."/>
            <person name="Sekine M."/>
            <person name="Obayashi M."/>
            <person name="Nishi T."/>
            <person name="Shibahara T."/>
            <person name="Tanaka T."/>
            <person name="Ishii S."/>
            <person name="Yamamoto J."/>
            <person name="Saito K."/>
            <person name="Kawai Y."/>
            <person name="Isono Y."/>
            <person name="Nakamura Y."/>
            <person name="Nagahari K."/>
            <person name="Murakami K."/>
            <person name="Yasuda T."/>
            <person name="Iwayanagi T."/>
            <person name="Wagatsuma M."/>
            <person name="Shiratori A."/>
            <person name="Sudo H."/>
            <person name="Hosoiri T."/>
            <person name="Kaku Y."/>
            <person name="Kodaira H."/>
            <person name="Kondo H."/>
            <person name="Sugawara M."/>
            <person name="Takahashi M."/>
            <person name="Kanda K."/>
            <person name="Yokoi T."/>
            <person name="Furuya T."/>
            <person name="Kikkawa E."/>
            <person name="Omura Y."/>
            <person name="Abe K."/>
            <person name="Kamihara K."/>
            <person name="Katsuta N."/>
            <person name="Sato K."/>
            <person name="Tanikawa M."/>
            <person name="Yamazaki M."/>
            <person name="Ninomiya K."/>
            <person name="Ishibashi T."/>
            <person name="Yamashita H."/>
            <person name="Murakawa K."/>
            <person name="Fujimori K."/>
            <person name="Tanai H."/>
            <person name="Kimata M."/>
            <person name="Watanabe M."/>
            <person name="Hiraoka S."/>
            <person name="Chiba Y."/>
            <person name="Ishida S."/>
            <person name="Ono Y."/>
            <person name="Takiguchi S."/>
            <person name="Watanabe S."/>
            <person name="Yosida M."/>
            <person name="Hotuta T."/>
            <person name="Kusano J."/>
            <person name="Kanehori K."/>
            <person name="Takahashi-Fujii A."/>
            <person name="Hara H."/>
            <person name="Tanase T.-O."/>
            <person name="Nomura Y."/>
            <person name="Togiya S."/>
            <person name="Komai F."/>
            <person name="Hara R."/>
            <person name="Takeuchi K."/>
            <person name="Arita M."/>
            <person name="Imose N."/>
            <person name="Musashino K."/>
            <person name="Yuuki H."/>
            <person name="Oshima A."/>
            <person name="Sasaki N."/>
            <person name="Aotsuka S."/>
            <person name="Yoshikawa Y."/>
            <person name="Matsunawa H."/>
            <person name="Ichihara T."/>
            <person name="Shiohata N."/>
            <person name="Sano S."/>
            <person name="Moriya S."/>
            <person name="Momiyama H."/>
            <person name="Satoh N."/>
            <person name="Takami S."/>
            <person name="Terashima Y."/>
            <person name="Suzuki O."/>
            <person name="Nakagawa S."/>
            <person name="Senoh A."/>
            <person name="Mizoguchi H."/>
            <person name="Goto Y."/>
            <person name="Shimizu F."/>
            <person name="Wakebe H."/>
            <person name="Hishigaki H."/>
            <person name="Watanabe T."/>
            <person name="Sugiyama A."/>
            <person name="Takemoto M."/>
            <person name="Kawakami B."/>
            <person name="Yamazaki M."/>
            <person name="Watanabe K."/>
            <person name="Kumagai A."/>
            <person name="Itakura S."/>
            <person name="Fukuzumi Y."/>
            <person name="Fujimori Y."/>
            <person name="Komiyama M."/>
            <person name="Tashiro H."/>
            <person name="Tanigami A."/>
            <person name="Fujiwara T."/>
            <person name="Ono T."/>
            <person name="Yamada K."/>
            <person name="Fujii Y."/>
            <person name="Ozaki K."/>
            <person name="Hirao M."/>
            <person name="Ohmori Y."/>
            <person name="Kawabata A."/>
            <person name="Hikiji T."/>
            <person name="Kobatake N."/>
            <person name="Inagaki H."/>
            <person name="Ikema Y."/>
            <person name="Okamoto S."/>
            <person name="Okitani R."/>
            <person name="Kawakami T."/>
            <person name="Noguchi S."/>
            <person name="Itoh T."/>
            <person name="Shigeta K."/>
            <person name="Senba T."/>
            <person name="Matsumura K."/>
            <person name="Nakajima Y."/>
            <person name="Mizuno T."/>
            <person name="Morinaga M."/>
            <person name="Sasaki M."/>
            <person name="Togashi T."/>
            <person name="Oyama M."/>
            <person name="Hata H."/>
            <person name="Watanabe M."/>
            <person name="Komatsu T."/>
            <person name="Mizushima-Sugano J."/>
            <person name="Satoh T."/>
            <person name="Shirai Y."/>
            <person name="Takahashi Y."/>
            <person name="Nakagawa K."/>
            <person name="Okumura K."/>
            <person name="Nagase T."/>
            <person name="Nomura N."/>
            <person name="Kikuchi H."/>
            <person name="Masuho Y."/>
            <person name="Yamashita R."/>
            <person name="Nakai K."/>
            <person name="Yada T."/>
            <person name="Nakamura Y."/>
            <person name="Ohara O."/>
            <person name="Isogai T."/>
            <person name="Sugano S."/>
        </authorList>
    </citation>
    <scope>NUCLEOTIDE SEQUENCE [LARGE SCALE MRNA] (ISOFORM 1)</scope>
    <scope>NUCLEOTIDE SEQUENCE [LARGE SCALE MRNA] OF 235-716 (ISOFORM 2)</scope>
    <source>
        <tissue>Brain</tissue>
        <tissue>Cerebellum</tissue>
        <tissue>Trachea</tissue>
    </source>
</reference>
<reference key="2">
    <citation type="journal article" date="2004" name="Genome Res.">
        <title>The status, quality, and expansion of the NIH full-length cDNA project: the Mammalian Gene Collection (MGC).</title>
        <authorList>
            <consortium name="The MGC Project Team"/>
        </authorList>
    </citation>
    <scope>NUCLEOTIDE SEQUENCE [LARGE SCALE MRNA] (ISOFORM 1)</scope>
</reference>
<reference key="3">
    <citation type="journal article" date="2007" name="BMC Genomics">
        <title>The full-ORF clone resource of the German cDNA consortium.</title>
        <authorList>
            <person name="Bechtel S."/>
            <person name="Rosenfelder H."/>
            <person name="Duda A."/>
            <person name="Schmidt C.P."/>
            <person name="Ernst U."/>
            <person name="Wellenreuther R."/>
            <person name="Mehrle A."/>
            <person name="Schuster C."/>
            <person name="Bahr A."/>
            <person name="Bloecker H."/>
            <person name="Heubner D."/>
            <person name="Hoerlein A."/>
            <person name="Michel G."/>
            <person name="Wedler H."/>
            <person name="Koehrer K."/>
            <person name="Ottenwaelder B."/>
            <person name="Poustka A."/>
            <person name="Wiemann S."/>
            <person name="Schupp I."/>
        </authorList>
    </citation>
    <scope>NUCLEOTIDE SEQUENCE [LARGE SCALE MRNA] OF 203-716 (ISOFORM 1)</scope>
    <source>
        <tissue>Prostate</tissue>
    </source>
</reference>
<reference key="4">
    <citation type="journal article" date="2006" name="BMC Genomics">
        <title>Duplication and relocation of the functional DPY19L2 gene within low copy repeats.</title>
        <authorList>
            <person name="Carson A.R."/>
            <person name="Cheung J."/>
            <person name="Scherer S.W."/>
        </authorList>
    </citation>
    <scope>TISSUE SPECIFICITY</scope>
</reference>
<reference key="5">
    <citation type="journal article" date="2016" name="Mol. Biol. Cell">
        <title>Identification of DPY19L3 as the C-mannosyltransferase of R-spondin1 in human cells.</title>
        <authorList>
            <person name="Niwa Y."/>
            <person name="Suzuki T."/>
            <person name="Dohmae N."/>
            <person name="Simizu S."/>
        </authorList>
    </citation>
    <scope>FUNCTION</scope>
    <scope>CATALYTIC ACTIVITY</scope>
</reference>
<reference key="6">
    <citation type="journal article" date="2018" name="FEBS J.">
        <title>Topological analysis of DPY19L3, a human C-mannosyltransferase.</title>
        <authorList>
            <person name="Niwa Y."/>
            <person name="Nakano Y."/>
            <person name="Suzuki T."/>
            <person name="Yamagishi M."/>
            <person name="Otani K."/>
            <person name="Dohmae N."/>
            <person name="Simizu S."/>
        </authorList>
    </citation>
    <scope>FUNCTION (ISOFORMS 1 AND 2)</scope>
    <scope>CATALYTIC ACTIVITY</scope>
    <scope>TOPOLOGY</scope>
    <scope>SUBCELLULAR LOCATION (ISOFORMS 1 AND 2)</scope>
    <scope>GLYCOSYLATION AT ASN-118 AND ASN-704</scope>
    <scope>MUTAGENESIS OF ASN-118 AND ASN-704</scope>
</reference>
<gene>
    <name type="primary">DPY19L3</name>
</gene>
<accession>Q6ZPD9</accession>
<accession>Q68DC7</accession>
<accession>Q6ZTB7</accession>
<accession>Q6ZTS2</accession>